<name>TIAS_PYRHO</name>
<feature type="chain" id="PRO_0000407300" description="tRNA(Ile2) 2-agmatinylcytidine synthetase TiaS">
    <location>
        <begin position="1"/>
        <end position="424"/>
    </location>
</feature>
<feature type="DNA-binding region" description="OB">
    <location>
        <begin position="268"/>
        <end position="342"/>
    </location>
</feature>
<comment type="function">
    <text evidence="1">ATP-dependent agmatine transferase that catalyzes the formation of 2-agmatinylcytidine (agm2C) at the wobble position (C34) of tRNA(Ile2), converting the codon specificity from AUG to AUA.</text>
</comment>
<comment type="catalytic activity">
    <reaction evidence="1">
        <text>cytidine(34) in tRNA(Ile2) + agmatine + ATP + H2O = 2-agmatinylcytidine(34) in tRNA(Ile2) + AMP + 2 phosphate + 2 H(+)</text>
        <dbReference type="Rhea" id="RHEA:43608"/>
        <dbReference type="Rhea" id="RHEA-COMP:10625"/>
        <dbReference type="Rhea" id="RHEA-COMP:10626"/>
        <dbReference type="ChEBI" id="CHEBI:15377"/>
        <dbReference type="ChEBI" id="CHEBI:15378"/>
        <dbReference type="ChEBI" id="CHEBI:30616"/>
        <dbReference type="ChEBI" id="CHEBI:43474"/>
        <dbReference type="ChEBI" id="CHEBI:58145"/>
        <dbReference type="ChEBI" id="CHEBI:82748"/>
        <dbReference type="ChEBI" id="CHEBI:83545"/>
        <dbReference type="ChEBI" id="CHEBI:456215"/>
        <dbReference type="EC" id="6.3.4.22"/>
    </reaction>
</comment>
<comment type="subcellular location">
    <subcellularLocation>
        <location evidence="2">Cytoplasm</location>
    </subcellularLocation>
</comment>
<comment type="similarity">
    <text evidence="2">Belongs to the TiaS family.</text>
</comment>
<reference key="1">
    <citation type="journal article" date="1998" name="DNA Res.">
        <title>Complete sequence and gene organization of the genome of a hyper-thermophilic archaebacterium, Pyrococcus horikoshii OT3.</title>
        <authorList>
            <person name="Kawarabayasi Y."/>
            <person name="Sawada M."/>
            <person name="Horikawa H."/>
            <person name="Haikawa Y."/>
            <person name="Hino Y."/>
            <person name="Yamamoto S."/>
            <person name="Sekine M."/>
            <person name="Baba S."/>
            <person name="Kosugi H."/>
            <person name="Hosoyama A."/>
            <person name="Nagai Y."/>
            <person name="Sakai M."/>
            <person name="Ogura K."/>
            <person name="Otsuka R."/>
            <person name="Nakazawa H."/>
            <person name="Takamiya M."/>
            <person name="Ohfuku Y."/>
            <person name="Funahashi T."/>
            <person name="Tanaka T."/>
            <person name="Kudoh Y."/>
            <person name="Yamazaki J."/>
            <person name="Kushida N."/>
            <person name="Oguchi A."/>
            <person name="Aoki K."/>
            <person name="Yoshizawa T."/>
            <person name="Nakamura Y."/>
            <person name="Robb F.T."/>
            <person name="Horikoshi K."/>
            <person name="Masuchi Y."/>
            <person name="Shizuya H."/>
            <person name="Kikuchi H."/>
        </authorList>
    </citation>
    <scope>NUCLEOTIDE SEQUENCE [LARGE SCALE GENOMIC DNA]</scope>
    <source>
        <strain>ATCC 700860 / DSM 12428 / JCM 9974 / NBRC 100139 / OT-3</strain>
    </source>
</reference>
<reference key="2">
    <citation type="journal article" date="2010" name="Nat. Chem. Biol.">
        <title>Agmatine-conjugated cytidine in a tRNA anticodon is essential for AUA decoding in archaea.</title>
        <authorList>
            <person name="Ikeuchi Y."/>
            <person name="Kimura S."/>
            <person name="Numata T."/>
            <person name="Nakamura D."/>
            <person name="Yokogawa T."/>
            <person name="Ogata T."/>
            <person name="Wada T."/>
            <person name="Suzuki T."/>
            <person name="Suzuki T."/>
        </authorList>
    </citation>
    <scope>FUNCTION</scope>
    <scope>CATALYTIC ACTIVITY</scope>
</reference>
<organism>
    <name type="scientific">Pyrococcus horikoshii (strain ATCC 700860 / DSM 12428 / JCM 9974 / NBRC 100139 / OT-3)</name>
    <dbReference type="NCBI Taxonomy" id="70601"/>
    <lineage>
        <taxon>Archaea</taxon>
        <taxon>Methanobacteriati</taxon>
        <taxon>Methanobacteriota</taxon>
        <taxon>Thermococci</taxon>
        <taxon>Thermococcales</taxon>
        <taxon>Thermococcaceae</taxon>
        <taxon>Pyrococcus</taxon>
    </lineage>
</organism>
<protein>
    <recommendedName>
        <fullName>tRNA(Ile2) 2-agmatinylcytidine synthetase TiaS</fullName>
        <shortName>tRNA(Ile2)-agm2C synthetase</shortName>
        <ecNumber>6.3.4.22</ecNumber>
    </recommendedName>
    <alternativeName>
        <fullName>tRNA(Ile2) agmatidine synthetase</fullName>
    </alternativeName>
</protein>
<accession>O59476</accession>
<dbReference type="EC" id="6.3.4.22"/>
<dbReference type="EMBL" id="BA000001">
    <property type="protein sequence ID" value="BAA30931.1"/>
    <property type="molecule type" value="Genomic_DNA"/>
</dbReference>
<dbReference type="PIR" id="D71192">
    <property type="entry name" value="D71192"/>
</dbReference>
<dbReference type="RefSeq" id="WP_010885872.1">
    <property type="nucleotide sequence ID" value="NC_000961.1"/>
</dbReference>
<dbReference type="SMR" id="O59476"/>
<dbReference type="STRING" id="70601.gene:9378814"/>
<dbReference type="EnsemblBacteria" id="BAA30931">
    <property type="protein sequence ID" value="BAA30931"/>
    <property type="gene ID" value="BAA30931"/>
</dbReference>
<dbReference type="GeneID" id="1442654"/>
<dbReference type="KEGG" id="pho:PH1812"/>
<dbReference type="eggNOG" id="arCOG01115">
    <property type="taxonomic scope" value="Archaea"/>
</dbReference>
<dbReference type="OrthoDB" id="39189at2157"/>
<dbReference type="BRENDA" id="6.3.4.22">
    <property type="organism ID" value="5244"/>
</dbReference>
<dbReference type="Proteomes" id="UP000000752">
    <property type="component" value="Chromosome"/>
</dbReference>
<dbReference type="GO" id="GO:0005737">
    <property type="term" value="C:cytoplasm"/>
    <property type="evidence" value="ECO:0007669"/>
    <property type="project" value="UniProtKB-SubCell"/>
</dbReference>
<dbReference type="GO" id="GO:0005524">
    <property type="term" value="F:ATP binding"/>
    <property type="evidence" value="ECO:0007669"/>
    <property type="project" value="UniProtKB-KW"/>
</dbReference>
<dbReference type="GO" id="GO:0016879">
    <property type="term" value="F:ligase activity, forming carbon-nitrogen bonds"/>
    <property type="evidence" value="ECO:0007669"/>
    <property type="project" value="UniProtKB-UniRule"/>
</dbReference>
<dbReference type="GO" id="GO:0003676">
    <property type="term" value="F:nucleic acid binding"/>
    <property type="evidence" value="ECO:0007669"/>
    <property type="project" value="InterPro"/>
</dbReference>
<dbReference type="GO" id="GO:0002101">
    <property type="term" value="P:tRNA wobble cytosine modification"/>
    <property type="evidence" value="ECO:0007669"/>
    <property type="project" value="UniProtKB-UniRule"/>
</dbReference>
<dbReference type="CDD" id="cd04482">
    <property type="entry name" value="RPA2_OBF_like"/>
    <property type="match status" value="1"/>
</dbReference>
<dbReference type="Gene3D" id="2.40.50.1010">
    <property type="match status" value="1"/>
</dbReference>
<dbReference type="Gene3D" id="3.30.70.2200">
    <property type="match status" value="1"/>
</dbReference>
<dbReference type="Gene3D" id="3.90.600.20">
    <property type="match status" value="1"/>
</dbReference>
<dbReference type="HAMAP" id="MF_01892">
    <property type="entry name" value="tRNA_Ile2_agm2C_synt"/>
    <property type="match status" value="1"/>
</dbReference>
<dbReference type="InterPro" id="IPR012340">
    <property type="entry name" value="NA-bd_OB-fold"/>
</dbReference>
<dbReference type="InterPro" id="IPR004365">
    <property type="entry name" value="NA-bd_OB_tRNA"/>
</dbReference>
<dbReference type="InterPro" id="IPR053434">
    <property type="entry name" value="TiaS"/>
</dbReference>
<dbReference type="InterPro" id="IPR053870">
    <property type="entry name" value="TiaS-like_TCKD"/>
</dbReference>
<dbReference type="InterPro" id="IPR013696">
    <property type="entry name" value="TiaS_FLD"/>
</dbReference>
<dbReference type="InterPro" id="IPR024913">
    <property type="entry name" value="tRNA_Ile2__agm2C_synt"/>
</dbReference>
<dbReference type="InterPro" id="IPR055394">
    <property type="entry name" value="Zn_ribbon_TiaS"/>
</dbReference>
<dbReference type="NCBIfam" id="NF040849">
    <property type="entry name" value="tRNAmod_TiaS"/>
    <property type="match status" value="1"/>
</dbReference>
<dbReference type="PANTHER" id="PTHR40705">
    <property type="entry name" value="TRNA(ILE2) 2-AGMATINYLCYTIDINE SYNTHETASE TIAS"/>
    <property type="match status" value="1"/>
</dbReference>
<dbReference type="PANTHER" id="PTHR40705:SF1">
    <property type="entry name" value="TRNA(ILE2) 2-AGMATINYLCYTIDINE SYNTHETASE TIAS"/>
    <property type="match status" value="1"/>
</dbReference>
<dbReference type="Pfam" id="PF08489">
    <property type="entry name" value="TiaS_FLD"/>
    <property type="match status" value="1"/>
</dbReference>
<dbReference type="Pfam" id="PF22641">
    <property type="entry name" value="TiaS_TCKD"/>
    <property type="match status" value="1"/>
</dbReference>
<dbReference type="Pfam" id="PF01336">
    <property type="entry name" value="tRNA_anti-codon"/>
    <property type="match status" value="1"/>
</dbReference>
<dbReference type="Pfam" id="PF23783">
    <property type="entry name" value="Zn_ribbon_TiaS"/>
    <property type="match status" value="1"/>
</dbReference>
<dbReference type="SUPFAM" id="SSF50249">
    <property type="entry name" value="Nucleic acid-binding proteins"/>
    <property type="match status" value="1"/>
</dbReference>
<proteinExistence type="evidence at protein level"/>
<evidence type="ECO:0000269" key="1">
    <source>
    </source>
</evidence>
<evidence type="ECO:0000305" key="2"/>
<gene>
    <name type="primary">tiaS</name>
    <name type="ordered locus">PH1812</name>
</gene>
<keyword id="KW-0067">ATP-binding</keyword>
<keyword id="KW-0963">Cytoplasm</keyword>
<keyword id="KW-0436">Ligase</keyword>
<keyword id="KW-0547">Nucleotide-binding</keyword>
<keyword id="KW-0819">tRNA processing</keyword>
<sequence length="424" mass="48450">MLLHIGLDDTDSPNGMCTTYLGALLYRELSRFGEPVDLPKLIRLNPNIPYKTRGNGAVSLTFDILEDYLNEAKELVVKTVKKLAEVEHENTNPGIAFLEGEVPEILRRFAIKALREHVTIDEAEKIAKKAGAEIVKLKLGRGIIGALASIGYPLNNYTYELLAYRKLENREKVRRVDRDSVFEMDRKFYPFTYDNVDPFKKTILITPHGKDPVLVGIRGIDKGKVLLAYENVIINENVEMIQLFKTNQSTDDHLVWKKIGDIKLYDNVIVKGKVASKYWERGRHVFFEIEDETGKIRVAAFEPTKKFRNYVRKLLPGDEVIVAGGVKEHEGVLTINLEKFYPIKLVPKVEYRKPKCPKCGGTMKSKGDYLKCKRCGYKMPKVLIPVKLPRDLERKIYEVPPDARKHLSRPLVLPKSEDKFIGPL</sequence>